<gene>
    <name type="primary">priA</name>
    <name type="synonym">hisA</name>
    <name type="ordered locus">MT1639</name>
</gene>
<organism>
    <name type="scientific">Mycobacterium tuberculosis (strain CDC 1551 / Oshkosh)</name>
    <dbReference type="NCBI Taxonomy" id="83331"/>
    <lineage>
        <taxon>Bacteria</taxon>
        <taxon>Bacillati</taxon>
        <taxon>Actinomycetota</taxon>
        <taxon>Actinomycetes</taxon>
        <taxon>Mycobacteriales</taxon>
        <taxon>Mycobacteriaceae</taxon>
        <taxon>Mycobacterium</taxon>
        <taxon>Mycobacterium tuberculosis complex</taxon>
    </lineage>
</organism>
<reference key="1">
    <citation type="journal article" date="2002" name="J. Bacteriol.">
        <title>Whole-genome comparison of Mycobacterium tuberculosis clinical and laboratory strains.</title>
        <authorList>
            <person name="Fleischmann R.D."/>
            <person name="Alland D."/>
            <person name="Eisen J.A."/>
            <person name="Carpenter L."/>
            <person name="White O."/>
            <person name="Peterson J.D."/>
            <person name="DeBoy R.T."/>
            <person name="Dodson R.J."/>
            <person name="Gwinn M.L."/>
            <person name="Haft D.H."/>
            <person name="Hickey E.K."/>
            <person name="Kolonay J.F."/>
            <person name="Nelson W.C."/>
            <person name="Umayam L.A."/>
            <person name="Ermolaeva M.D."/>
            <person name="Salzberg S.L."/>
            <person name="Delcher A."/>
            <person name="Utterback T.R."/>
            <person name="Weidman J.F."/>
            <person name="Khouri H.M."/>
            <person name="Gill J."/>
            <person name="Mikula A."/>
            <person name="Bishai W."/>
            <person name="Jacobs W.R. Jr."/>
            <person name="Venter J.C."/>
            <person name="Fraser C.M."/>
        </authorList>
    </citation>
    <scope>NUCLEOTIDE SEQUENCE [LARGE SCALE GENOMIC DNA]</scope>
    <source>
        <strain>CDC 1551 / Oshkosh</strain>
    </source>
</reference>
<comment type="function">
    <text evidence="1">Involved in both the histidine and tryptophan biosynthetic pathways.</text>
</comment>
<comment type="catalytic activity">
    <reaction>
        <text>1-(5-phospho-beta-D-ribosyl)-5-[(5-phospho-beta-D-ribosylamino)methylideneamino]imidazole-4-carboxamide = 5-[(5-phospho-1-deoxy-D-ribulos-1-ylimino)methylamino]-1-(5-phospho-beta-D-ribosyl)imidazole-4-carboxamide</text>
        <dbReference type="Rhea" id="RHEA:15469"/>
        <dbReference type="ChEBI" id="CHEBI:58435"/>
        <dbReference type="ChEBI" id="CHEBI:58525"/>
        <dbReference type="EC" id="5.3.1.16"/>
    </reaction>
</comment>
<comment type="catalytic activity">
    <reaction>
        <text>N-(5-phospho-beta-D-ribosyl)anthranilate = 1-(2-carboxyphenylamino)-1-deoxy-D-ribulose 5-phosphate</text>
        <dbReference type="Rhea" id="RHEA:21540"/>
        <dbReference type="ChEBI" id="CHEBI:18277"/>
        <dbReference type="ChEBI" id="CHEBI:58613"/>
        <dbReference type="EC" id="5.3.1.24"/>
    </reaction>
</comment>
<comment type="pathway">
    <text>Amino-acid biosynthesis; L-histidine biosynthesis; L-histidine from 5-phospho-alpha-D-ribose 1-diphosphate: step 4/9.</text>
</comment>
<comment type="pathway">
    <text>Amino-acid biosynthesis; L-tryptophan biosynthesis; L-tryptophan from chorismate: step 3/5.</text>
</comment>
<comment type="subcellular location">
    <subcellularLocation>
        <location evidence="1">Cytoplasm</location>
    </subcellularLocation>
</comment>
<comment type="similarity">
    <text evidence="2">Belongs to the HisA/HisF family.</text>
</comment>
<feature type="chain" id="PRO_0000427278" description="Phosphoribosyl isomerase A">
    <location>
        <begin position="1"/>
        <end position="244"/>
    </location>
</feature>
<feature type="active site" description="Proton acceptor" evidence="1">
    <location>
        <position position="10"/>
    </location>
</feature>
<feature type="active site" description="Proton donor" evidence="1">
    <location>
        <position position="129"/>
    </location>
</feature>
<evidence type="ECO:0000250" key="1"/>
<evidence type="ECO:0000305" key="2"/>
<dbReference type="EC" id="5.3.1.16"/>
<dbReference type="EC" id="5.3.1.24"/>
<dbReference type="EMBL" id="AE000516">
    <property type="protein sequence ID" value="AAK45907.1"/>
    <property type="molecule type" value="Genomic_DNA"/>
</dbReference>
<dbReference type="PIR" id="E70544">
    <property type="entry name" value="E70544"/>
</dbReference>
<dbReference type="SMR" id="P9WMM4"/>
<dbReference type="KEGG" id="mtc:MT1639"/>
<dbReference type="HOGENOM" id="CLU_048577_1_1_11"/>
<dbReference type="UniPathway" id="UPA00031">
    <property type="reaction ID" value="UER00009"/>
</dbReference>
<dbReference type="UniPathway" id="UPA00035">
    <property type="reaction ID" value="UER00042"/>
</dbReference>
<dbReference type="Proteomes" id="UP000001020">
    <property type="component" value="Chromosome"/>
</dbReference>
<dbReference type="GO" id="GO:0005737">
    <property type="term" value="C:cytoplasm"/>
    <property type="evidence" value="ECO:0007669"/>
    <property type="project" value="UniProtKB-SubCell"/>
</dbReference>
<dbReference type="GO" id="GO:0003949">
    <property type="term" value="F:1-(5-phosphoribosyl)-5-[(5-phosphoribosylamino)methylideneamino]imidazole-4-carboxamide isomerase activity"/>
    <property type="evidence" value="ECO:0007669"/>
    <property type="project" value="UniProtKB-UniRule"/>
</dbReference>
<dbReference type="GO" id="GO:0004640">
    <property type="term" value="F:phosphoribosylanthranilate isomerase activity"/>
    <property type="evidence" value="ECO:0007669"/>
    <property type="project" value="UniProtKB-UniRule"/>
</dbReference>
<dbReference type="GO" id="GO:0000105">
    <property type="term" value="P:L-histidine biosynthetic process"/>
    <property type="evidence" value="ECO:0007669"/>
    <property type="project" value="UniProtKB-UniRule"/>
</dbReference>
<dbReference type="GO" id="GO:0000162">
    <property type="term" value="P:L-tryptophan biosynthetic process"/>
    <property type="evidence" value="ECO:0007669"/>
    <property type="project" value="UniProtKB-UniRule"/>
</dbReference>
<dbReference type="CDD" id="cd04732">
    <property type="entry name" value="HisA"/>
    <property type="match status" value="1"/>
</dbReference>
<dbReference type="FunFam" id="3.20.20.70:FF:000009">
    <property type="entry name" value="1-(5-phosphoribosyl)-5-[(5-phosphoribosylamino)methylideneamino] imidazole-4-carboxamide isomerase"/>
    <property type="match status" value="1"/>
</dbReference>
<dbReference type="Gene3D" id="3.20.20.70">
    <property type="entry name" value="Aldolase class I"/>
    <property type="match status" value="1"/>
</dbReference>
<dbReference type="HAMAP" id="MF_01014">
    <property type="entry name" value="HisA"/>
    <property type="match status" value="1"/>
</dbReference>
<dbReference type="InterPro" id="IPR013785">
    <property type="entry name" value="Aldolase_TIM"/>
</dbReference>
<dbReference type="InterPro" id="IPR006062">
    <property type="entry name" value="His_biosynth"/>
</dbReference>
<dbReference type="InterPro" id="IPR010188">
    <property type="entry name" value="HisA/PriA_Actinobacteria"/>
</dbReference>
<dbReference type="InterPro" id="IPR044524">
    <property type="entry name" value="Isoase_HisA-like"/>
</dbReference>
<dbReference type="InterPro" id="IPR023016">
    <property type="entry name" value="Isoase_HisA-like_bact"/>
</dbReference>
<dbReference type="InterPro" id="IPR011060">
    <property type="entry name" value="RibuloseP-bd_barrel"/>
</dbReference>
<dbReference type="NCBIfam" id="TIGR01919">
    <property type="entry name" value="hisA-trpF"/>
    <property type="match status" value="1"/>
</dbReference>
<dbReference type="PANTHER" id="PTHR43090">
    <property type="entry name" value="1-(5-PHOSPHORIBOSYL)-5-[(5-PHOSPHORIBOSYLAMINO)METHYLIDENEAMINO] IMIDAZOLE-4-CARBOXAMIDE ISOMERASE"/>
    <property type="match status" value="1"/>
</dbReference>
<dbReference type="PANTHER" id="PTHR43090:SF2">
    <property type="entry name" value="1-(5-PHOSPHORIBOSYL)-5-[(5-PHOSPHORIBOSYLAMINO)METHYLIDENEAMINO] IMIDAZOLE-4-CARBOXAMIDE ISOMERASE"/>
    <property type="match status" value="1"/>
</dbReference>
<dbReference type="Pfam" id="PF00977">
    <property type="entry name" value="His_biosynth"/>
    <property type="match status" value="1"/>
</dbReference>
<dbReference type="SUPFAM" id="SSF51366">
    <property type="entry name" value="Ribulose-phoshate binding barrel"/>
    <property type="match status" value="1"/>
</dbReference>
<protein>
    <recommendedName>
        <fullName>Phosphoribosyl isomerase A</fullName>
    </recommendedName>
    <alternativeName>
        <fullName>1-(5-phosphoribosyl)-5-[(5-phosphoribosylamino)methylideneamino] imidazole-4-carboxamide isomerase</fullName>
        <ecNumber>5.3.1.16</ecNumber>
    </alternativeName>
    <alternativeName>
        <fullName>N-(5'-phosphoribosyl)anthranilate isomerase</fullName>
        <shortName>PRAI</shortName>
        <ecNumber>5.3.1.24</ecNumber>
    </alternativeName>
    <alternativeName>
        <fullName>Phosphoribosylformimino-5-aminoimidazole carboxamide ribotide isomerase</fullName>
    </alternativeName>
</protein>
<name>HIS4_MYCTO</name>
<keyword id="KW-0028">Amino-acid biosynthesis</keyword>
<keyword id="KW-0057">Aromatic amino acid biosynthesis</keyword>
<keyword id="KW-0963">Cytoplasm</keyword>
<keyword id="KW-0368">Histidine biosynthesis</keyword>
<keyword id="KW-0413">Isomerase</keyword>
<keyword id="KW-1185">Reference proteome</keyword>
<keyword id="KW-0822">Tryptophan biosynthesis</keyword>
<proteinExistence type="inferred from homology"/>
<sequence>MPLILLPAVDVVEGRAVRLVQGKAGSQTEYGSAVDAALGWQRDGAEWIHLVDLDAAFGRGSNHELLAEVVGKLDVQVELSGGIRDDESLAAALATGCARVNVGTAALENPQWCARVIGEHGDQVAVGLDVQIIDGEHRLRGRGWETDGGDLWDVLERLDSEGCSRFVVTDITKDGTLGGPNLDLLAGVADRTDAPVIASGGVSSLDDLRAIATLTHRGVEGAIVGKALYARRFTLPQALAAVRD</sequence>
<accession>P9WMM4</accession>
<accession>L0T7E1</accession>
<accession>O06588</accession>
<accession>P60578</accession>